<name>ACPS_BUCAP</name>
<keyword id="KW-0963">Cytoplasm</keyword>
<keyword id="KW-0275">Fatty acid biosynthesis</keyword>
<keyword id="KW-0276">Fatty acid metabolism</keyword>
<keyword id="KW-0444">Lipid biosynthesis</keyword>
<keyword id="KW-0443">Lipid metabolism</keyword>
<keyword id="KW-0460">Magnesium</keyword>
<keyword id="KW-0479">Metal-binding</keyword>
<keyword id="KW-0808">Transferase</keyword>
<accession>Q8K9R3</accession>
<proteinExistence type="inferred from homology"/>
<dbReference type="EC" id="2.7.8.7" evidence="1"/>
<dbReference type="EMBL" id="AE013218">
    <property type="protein sequence ID" value="AAM67806.1"/>
    <property type="molecule type" value="Genomic_DNA"/>
</dbReference>
<dbReference type="RefSeq" id="WP_011053773.1">
    <property type="nucleotide sequence ID" value="NC_004061.1"/>
</dbReference>
<dbReference type="SMR" id="Q8K9R3"/>
<dbReference type="STRING" id="198804.BUsg_247"/>
<dbReference type="GeneID" id="93003717"/>
<dbReference type="KEGG" id="bas:BUsg_247"/>
<dbReference type="eggNOG" id="COG0736">
    <property type="taxonomic scope" value="Bacteria"/>
</dbReference>
<dbReference type="HOGENOM" id="CLU_089696_3_1_6"/>
<dbReference type="Proteomes" id="UP000000416">
    <property type="component" value="Chromosome"/>
</dbReference>
<dbReference type="GO" id="GO:0005737">
    <property type="term" value="C:cytoplasm"/>
    <property type="evidence" value="ECO:0007669"/>
    <property type="project" value="UniProtKB-SubCell"/>
</dbReference>
<dbReference type="GO" id="GO:0008897">
    <property type="term" value="F:holo-[acyl-carrier-protein] synthase activity"/>
    <property type="evidence" value="ECO:0007669"/>
    <property type="project" value="UniProtKB-UniRule"/>
</dbReference>
<dbReference type="GO" id="GO:0000287">
    <property type="term" value="F:magnesium ion binding"/>
    <property type="evidence" value="ECO:0007669"/>
    <property type="project" value="UniProtKB-UniRule"/>
</dbReference>
<dbReference type="GO" id="GO:0006633">
    <property type="term" value="P:fatty acid biosynthetic process"/>
    <property type="evidence" value="ECO:0007669"/>
    <property type="project" value="UniProtKB-UniRule"/>
</dbReference>
<dbReference type="FunFam" id="3.90.470.20:FF:000001">
    <property type="entry name" value="Holo-[acyl-carrier-protein] synthase"/>
    <property type="match status" value="1"/>
</dbReference>
<dbReference type="Gene3D" id="3.90.470.20">
    <property type="entry name" value="4'-phosphopantetheinyl transferase domain"/>
    <property type="match status" value="1"/>
</dbReference>
<dbReference type="HAMAP" id="MF_00101">
    <property type="entry name" value="AcpS"/>
    <property type="match status" value="1"/>
</dbReference>
<dbReference type="InterPro" id="IPR008278">
    <property type="entry name" value="4-PPantetheinyl_Trfase_dom"/>
</dbReference>
<dbReference type="InterPro" id="IPR037143">
    <property type="entry name" value="4-PPantetheinyl_Trfase_dom_sf"/>
</dbReference>
<dbReference type="InterPro" id="IPR002582">
    <property type="entry name" value="ACPS"/>
</dbReference>
<dbReference type="InterPro" id="IPR004568">
    <property type="entry name" value="Ppantetheine-prot_Trfase_dom"/>
</dbReference>
<dbReference type="NCBIfam" id="TIGR00516">
    <property type="entry name" value="acpS"/>
    <property type="match status" value="1"/>
</dbReference>
<dbReference type="NCBIfam" id="TIGR00556">
    <property type="entry name" value="pantethn_trn"/>
    <property type="match status" value="1"/>
</dbReference>
<dbReference type="Pfam" id="PF01648">
    <property type="entry name" value="ACPS"/>
    <property type="match status" value="1"/>
</dbReference>
<dbReference type="SUPFAM" id="SSF56214">
    <property type="entry name" value="4'-phosphopantetheinyl transferase"/>
    <property type="match status" value="1"/>
</dbReference>
<evidence type="ECO:0000255" key="1">
    <source>
        <dbReference type="HAMAP-Rule" id="MF_00101"/>
    </source>
</evidence>
<organism>
    <name type="scientific">Buchnera aphidicola subsp. Schizaphis graminum (strain Sg)</name>
    <dbReference type="NCBI Taxonomy" id="198804"/>
    <lineage>
        <taxon>Bacteria</taxon>
        <taxon>Pseudomonadati</taxon>
        <taxon>Pseudomonadota</taxon>
        <taxon>Gammaproteobacteria</taxon>
        <taxon>Enterobacterales</taxon>
        <taxon>Erwiniaceae</taxon>
        <taxon>Buchnera</taxon>
    </lineage>
</organism>
<feature type="chain" id="PRO_0000175622" description="Holo-[acyl-carrier-protein] synthase">
    <location>
        <begin position="1"/>
        <end position="126"/>
    </location>
</feature>
<feature type="binding site" evidence="1">
    <location>
        <position position="9"/>
    </location>
    <ligand>
        <name>Mg(2+)</name>
        <dbReference type="ChEBI" id="CHEBI:18420"/>
    </ligand>
</feature>
<feature type="binding site" evidence="1">
    <location>
        <position position="58"/>
    </location>
    <ligand>
        <name>Mg(2+)</name>
        <dbReference type="ChEBI" id="CHEBI:18420"/>
    </ligand>
</feature>
<comment type="function">
    <text evidence="1">Transfers the 4'-phosphopantetheine moiety from coenzyme A to a Ser of acyl-carrier-protein.</text>
</comment>
<comment type="catalytic activity">
    <reaction evidence="1">
        <text>apo-[ACP] + CoA = holo-[ACP] + adenosine 3',5'-bisphosphate + H(+)</text>
        <dbReference type="Rhea" id="RHEA:12068"/>
        <dbReference type="Rhea" id="RHEA-COMP:9685"/>
        <dbReference type="Rhea" id="RHEA-COMP:9690"/>
        <dbReference type="ChEBI" id="CHEBI:15378"/>
        <dbReference type="ChEBI" id="CHEBI:29999"/>
        <dbReference type="ChEBI" id="CHEBI:57287"/>
        <dbReference type="ChEBI" id="CHEBI:58343"/>
        <dbReference type="ChEBI" id="CHEBI:64479"/>
        <dbReference type="EC" id="2.7.8.7"/>
    </reaction>
</comment>
<comment type="cofactor">
    <cofactor evidence="1">
        <name>Mg(2+)</name>
        <dbReference type="ChEBI" id="CHEBI:18420"/>
    </cofactor>
</comment>
<comment type="subcellular location">
    <subcellularLocation>
        <location evidence="1">Cytoplasm</location>
    </subcellularLocation>
</comment>
<comment type="similarity">
    <text evidence="1">Belongs to the P-Pant transferase superfamily. AcpS family.</text>
</comment>
<sequence>MSIIGIGTDIIEIFRIKNIVYNFKDKLAERILSVQELEKYKVNKNPIKFLAKRFAVKEAASKALGTGISYGIKFNQIELYNNNLGKPKLRFLKYALQKSEEMKCKSIFVSISDEKLYACALVILEK</sequence>
<reference key="1">
    <citation type="journal article" date="2002" name="Science">
        <title>50 million years of genomic stasis in endosymbiotic bacteria.</title>
        <authorList>
            <person name="Tamas I."/>
            <person name="Klasson L."/>
            <person name="Canbaeck B."/>
            <person name="Naeslund A.K."/>
            <person name="Eriksson A.-S."/>
            <person name="Wernegreen J.J."/>
            <person name="Sandstroem J.P."/>
            <person name="Moran N.A."/>
            <person name="Andersson S.G.E."/>
        </authorList>
    </citation>
    <scope>NUCLEOTIDE SEQUENCE [LARGE SCALE GENOMIC DNA]</scope>
    <source>
        <strain>Sg</strain>
    </source>
</reference>
<protein>
    <recommendedName>
        <fullName evidence="1">Holo-[acyl-carrier-protein] synthase</fullName>
        <shortName evidence="1">Holo-ACP synthase</shortName>
        <ecNumber evidence="1">2.7.8.7</ecNumber>
    </recommendedName>
    <alternativeName>
        <fullName evidence="1">4'-phosphopantetheinyl transferase AcpS</fullName>
    </alternativeName>
</protein>
<gene>
    <name evidence="1" type="primary">acpS</name>
    <name type="ordered locus">BUsg_247</name>
</gene>